<reference key="1">
    <citation type="journal article" date="2000" name="Nature">
        <title>Sequence and analysis of chromosome 1 of the plant Arabidopsis thaliana.</title>
        <authorList>
            <person name="Theologis A."/>
            <person name="Ecker J.R."/>
            <person name="Palm C.J."/>
            <person name="Federspiel N.A."/>
            <person name="Kaul S."/>
            <person name="White O."/>
            <person name="Alonso J."/>
            <person name="Altafi H."/>
            <person name="Araujo R."/>
            <person name="Bowman C.L."/>
            <person name="Brooks S.Y."/>
            <person name="Buehler E."/>
            <person name="Chan A."/>
            <person name="Chao Q."/>
            <person name="Chen H."/>
            <person name="Cheuk R.F."/>
            <person name="Chin C.W."/>
            <person name="Chung M.K."/>
            <person name="Conn L."/>
            <person name="Conway A.B."/>
            <person name="Conway A.R."/>
            <person name="Creasy T.H."/>
            <person name="Dewar K."/>
            <person name="Dunn P."/>
            <person name="Etgu P."/>
            <person name="Feldblyum T.V."/>
            <person name="Feng J.-D."/>
            <person name="Fong B."/>
            <person name="Fujii C.Y."/>
            <person name="Gill J.E."/>
            <person name="Goldsmith A.D."/>
            <person name="Haas B."/>
            <person name="Hansen N.F."/>
            <person name="Hughes B."/>
            <person name="Huizar L."/>
            <person name="Hunter J.L."/>
            <person name="Jenkins J."/>
            <person name="Johnson-Hopson C."/>
            <person name="Khan S."/>
            <person name="Khaykin E."/>
            <person name="Kim C.J."/>
            <person name="Koo H.L."/>
            <person name="Kremenetskaia I."/>
            <person name="Kurtz D.B."/>
            <person name="Kwan A."/>
            <person name="Lam B."/>
            <person name="Langin-Hooper S."/>
            <person name="Lee A."/>
            <person name="Lee J.M."/>
            <person name="Lenz C.A."/>
            <person name="Li J.H."/>
            <person name="Li Y.-P."/>
            <person name="Lin X."/>
            <person name="Liu S.X."/>
            <person name="Liu Z.A."/>
            <person name="Luros J.S."/>
            <person name="Maiti R."/>
            <person name="Marziali A."/>
            <person name="Militscher J."/>
            <person name="Miranda M."/>
            <person name="Nguyen M."/>
            <person name="Nierman W.C."/>
            <person name="Osborne B.I."/>
            <person name="Pai G."/>
            <person name="Peterson J."/>
            <person name="Pham P.K."/>
            <person name="Rizzo M."/>
            <person name="Rooney T."/>
            <person name="Rowley D."/>
            <person name="Sakano H."/>
            <person name="Salzberg S.L."/>
            <person name="Schwartz J.R."/>
            <person name="Shinn P."/>
            <person name="Southwick A.M."/>
            <person name="Sun H."/>
            <person name="Tallon L.J."/>
            <person name="Tambunga G."/>
            <person name="Toriumi M.J."/>
            <person name="Town C.D."/>
            <person name="Utterback T."/>
            <person name="Van Aken S."/>
            <person name="Vaysberg M."/>
            <person name="Vysotskaia V.S."/>
            <person name="Walker M."/>
            <person name="Wu D."/>
            <person name="Yu G."/>
            <person name="Fraser C.M."/>
            <person name="Venter J.C."/>
            <person name="Davis R.W."/>
        </authorList>
    </citation>
    <scope>NUCLEOTIDE SEQUENCE [LARGE SCALE GENOMIC DNA]</scope>
    <source>
        <strain>cv. Columbia</strain>
    </source>
</reference>
<reference key="2">
    <citation type="journal article" date="2017" name="Plant J.">
        <title>Araport11: a complete reannotation of the Arabidopsis thaliana reference genome.</title>
        <authorList>
            <person name="Cheng C.Y."/>
            <person name="Krishnakumar V."/>
            <person name="Chan A.P."/>
            <person name="Thibaud-Nissen F."/>
            <person name="Schobel S."/>
            <person name="Town C.D."/>
        </authorList>
    </citation>
    <scope>GENOME REANNOTATION</scope>
    <source>
        <strain>cv. Columbia</strain>
    </source>
</reference>
<reference key="3">
    <citation type="journal article" date="2006" name="Plant Cell">
        <title>pTAC2, -6, and -12 are components of the transcriptionally active plastid chromosome that are required for plastid gene expression.</title>
        <authorList>
            <person name="Pfalz J."/>
            <person name="Liere K."/>
            <person name="Kandlbinder A."/>
            <person name="Dietz K.-J."/>
            <person name="Oelmueller R."/>
        </authorList>
    </citation>
    <scope>FUNCTION</scope>
    <scope>IDENTIFICATION BY MASS SPECTROMETRY</scope>
</reference>
<reference key="4">
    <citation type="journal article" date="2009" name="Plant Physiol.">
        <title>Large-scale Arabidopsis phosphoproteome profiling reveals novel chloroplast kinase substrates and phosphorylation networks.</title>
        <authorList>
            <person name="Reiland S."/>
            <person name="Messerli G."/>
            <person name="Baerenfaller K."/>
            <person name="Gerrits B."/>
            <person name="Endler A."/>
            <person name="Grossmann J."/>
            <person name="Gruissem W."/>
            <person name="Baginsky S."/>
        </authorList>
    </citation>
    <scope>IDENTIFICATION BY MASS SPECTROMETRY [LARGE SCALE ANALYSIS]</scope>
</reference>
<reference key="5">
    <citation type="journal article" date="2010" name="Plant Cell">
        <title>Plastidial thioredoxin z interacts with two fructokinase-like proteins in a thiol-dependent manner: evidence for an essential role in chloroplast development in Arabidopsis and Nicotiana benthamiana.</title>
        <authorList>
            <person name="Arsova B."/>
            <person name="Hoja U."/>
            <person name="Wimmelbacher M."/>
            <person name="Greiner E."/>
            <person name="Ustun S."/>
            <person name="Melzer M."/>
            <person name="Petersen K."/>
            <person name="Lein W."/>
            <person name="Bornke F."/>
        </authorList>
    </citation>
    <scope>FUNCTION</scope>
    <scope>INTERACTION WITH CITRX</scope>
    <scope>SUBCELLULAR LOCATION</scope>
    <scope>MUTAGENESIS OF CYS-208; CYS-209 AND 208-CYS-CYS-209</scope>
</reference>
<reference key="6">
    <citation type="journal article" date="2012" name="BMC Plant Biol.">
        <title>The plastid-localized pfkB-type carbohydrate kinases FRUCTOKINASE-LIKE 1 and 2 are essential for growth and development of Arabidopsis thaliana.</title>
        <authorList>
            <person name="Gilkerson J."/>
            <person name="Perez-Ruiz J.M."/>
            <person name="Chory J."/>
            <person name="Callis J."/>
        </authorList>
    </citation>
    <scope>DISRUPTION PHENOTYPE</scope>
    <scope>FUNCTION</scope>
</reference>
<reference key="7">
    <citation type="journal article" date="2013" name="PLoS ONE">
        <title>The reduced plastid-encoded polymerase-dependent plastid gene expression leads to the delayed greening of the Arabidopsis fln2 mutant.</title>
        <authorList>
            <person name="Huang C."/>
            <person name="Yu Q.-B."/>
            <person name="Lv R.-H."/>
            <person name="Yin Q.-Q."/>
            <person name="Chen G.-Y."/>
            <person name="Xu L."/>
            <person name="Yang Z.-N."/>
        </authorList>
    </citation>
    <scope>FUNCTION</scope>
    <scope>DISRUPTION PHENOTYPE</scope>
    <scope>INTERACTION WITH FLN1 AND PTAC5</scope>
    <source>
        <strain>cv. Columbia</strain>
    </source>
</reference>
<comment type="function">
    <text evidence="3 4 5 6">Required for proper chloroplast development, most likely through regulating plastid-encoded polymerase (PEP) dependent chloroplast transcription. Acts as a component of the transcriptionally active plastid chromosome that is required for plastid gene expression.</text>
</comment>
<comment type="subunit">
    <text evidence="4 6">Interacts with CITRX/TRXz (PubMed:20511297). Binds to FLN1 and PTAC5 (PubMed:24019900). Associates with the plastid-encoded RNA polymerase (PEP) complex (PubMed:24019900).</text>
</comment>
<comment type="interaction">
    <interactant intactId="EBI-9823671">
        <id>F4I0K2</id>
    </interactant>
    <interactant intactId="EBI-9823626">
        <id>Q9M7X9</id>
        <label>CITRX</label>
    </interactant>
    <organismsDiffer>false</organismsDiffer>
    <experiments>3</experiments>
</comment>
<comment type="subcellular location">
    <subcellularLocation>
        <location evidence="4">Plastid</location>
        <location evidence="4">Chloroplast</location>
    </subcellularLocation>
</comment>
<comment type="disruption phenotype">
    <text evidence="5 6">Plants display chlorosis prior to leaf expansion, but exhibit slow greening, remain autotrophic, can grow to maturity, and set viable seed (PubMed:22770232). Albino phenotype of seedlings grown on sucrose-free medium associated with reduced plastid-encoded RNA polymerase (PEP)-dependent gene expression and altered chloroplast development. Delayed greening of seedlings grown on sucrose-containing medium (PubMed:24019900).</text>
</comment>
<comment type="miscellaneous">
    <text evidence="4">RNAi plants display abnormal plastids lacking internal membrane structures.</text>
</comment>
<comment type="similarity">
    <text evidence="9">Belongs to the carbohydrate kinase PfkB family.</text>
</comment>
<comment type="sequence caution" evidence="9">
    <conflict type="erroneous gene model prediction">
        <sequence resource="EMBL-CDS" id="AAF27059"/>
    </conflict>
</comment>
<evidence type="ECO:0000255" key="1"/>
<evidence type="ECO:0000256" key="2">
    <source>
        <dbReference type="SAM" id="MobiDB-lite"/>
    </source>
</evidence>
<evidence type="ECO:0000269" key="3">
    <source>
    </source>
</evidence>
<evidence type="ECO:0000269" key="4">
    <source>
    </source>
</evidence>
<evidence type="ECO:0000269" key="5">
    <source>
    </source>
</evidence>
<evidence type="ECO:0000269" key="6">
    <source>
    </source>
</evidence>
<evidence type="ECO:0000303" key="7">
    <source>
    </source>
</evidence>
<evidence type="ECO:0000303" key="8">
    <source>
    </source>
</evidence>
<evidence type="ECO:0000305" key="9"/>
<evidence type="ECO:0000312" key="10">
    <source>
        <dbReference type="Araport" id="AT1G69200"/>
    </source>
</evidence>
<evidence type="ECO:0000312" key="11">
    <source>
        <dbReference type="EMBL" id="AAF27059.1"/>
    </source>
</evidence>
<evidence type="ECO:0000312" key="12">
    <source>
        <dbReference type="EMBL" id="AAG52502.1"/>
    </source>
</evidence>
<feature type="transit peptide" description="Chloroplast" evidence="1">
    <location>
        <begin position="1"/>
        <end position="44"/>
    </location>
</feature>
<feature type="chain" id="PRO_0000430870" description="Fructokinase-like 2, chloroplastic">
    <location>
        <begin position="45"/>
        <end position="614"/>
    </location>
</feature>
<feature type="region of interest" description="Disordered" evidence="2">
    <location>
        <begin position="47"/>
        <end position="75"/>
    </location>
</feature>
<feature type="region of interest" description="Disordered" evidence="2">
    <location>
        <begin position="542"/>
        <end position="592"/>
    </location>
</feature>
<feature type="compositionally biased region" description="Acidic residues" evidence="2">
    <location>
        <begin position="548"/>
        <end position="563"/>
    </location>
</feature>
<feature type="compositionally biased region" description="Basic and acidic residues" evidence="2">
    <location>
        <begin position="571"/>
        <end position="583"/>
    </location>
</feature>
<feature type="mutagenesis site" description="Abolishes interaction with CITRX." evidence="4">
    <original>CC</original>
    <variation>AA</variation>
    <location>
        <begin position="208"/>
        <end position="209"/>
    </location>
</feature>
<feature type="mutagenesis site" description="Strongly reduces the interaction with CITRX." evidence="4">
    <original>C</original>
    <variation>A</variation>
    <location>
        <position position="208"/>
    </location>
</feature>
<feature type="mutagenesis site" description="Strongly reduces the interaction with CITRX." evidence="4">
    <original>C</original>
    <variation>A</variation>
    <location>
        <position position="209"/>
    </location>
</feature>
<organism>
    <name type="scientific">Arabidopsis thaliana</name>
    <name type="common">Mouse-ear cress</name>
    <dbReference type="NCBI Taxonomy" id="3702"/>
    <lineage>
        <taxon>Eukaryota</taxon>
        <taxon>Viridiplantae</taxon>
        <taxon>Streptophyta</taxon>
        <taxon>Embryophyta</taxon>
        <taxon>Tracheophyta</taxon>
        <taxon>Spermatophyta</taxon>
        <taxon>Magnoliopsida</taxon>
        <taxon>eudicotyledons</taxon>
        <taxon>Gunneridae</taxon>
        <taxon>Pentapetalae</taxon>
        <taxon>rosids</taxon>
        <taxon>malvids</taxon>
        <taxon>Brassicales</taxon>
        <taxon>Brassicaceae</taxon>
        <taxon>Camelineae</taxon>
        <taxon>Arabidopsis</taxon>
    </lineage>
</organism>
<gene>
    <name evidence="8" type="primary">FLN2</name>
    <name evidence="9" type="synonym">PAP13</name>
    <name evidence="7" type="synonym">PFKB1</name>
    <name evidence="10" type="ordered locus">At1g69200</name>
    <name evidence="12" type="ORF">F23O10.21</name>
    <name evidence="11" type="ORF">F4N2.16</name>
</gene>
<dbReference type="EMBL" id="AC008262">
    <property type="protein sequence ID" value="AAF27059.1"/>
    <property type="status" value="ALT_SEQ"/>
    <property type="molecule type" value="Genomic_DNA"/>
</dbReference>
<dbReference type="EMBL" id="AC018364">
    <property type="protein sequence ID" value="AAG52502.1"/>
    <property type="molecule type" value="Genomic_DNA"/>
</dbReference>
<dbReference type="EMBL" id="CP002684">
    <property type="protein sequence ID" value="AEE34893.2"/>
    <property type="molecule type" value="Genomic_DNA"/>
</dbReference>
<dbReference type="PIR" id="A96716">
    <property type="entry name" value="A96716"/>
</dbReference>
<dbReference type="RefSeq" id="NP_177080.3">
    <property type="nucleotide sequence ID" value="NM_105587.6"/>
</dbReference>
<dbReference type="SMR" id="F4I0K2"/>
<dbReference type="BioGRID" id="28472">
    <property type="interactions" value="12"/>
</dbReference>
<dbReference type="FunCoup" id="F4I0K2">
    <property type="interactions" value="198"/>
</dbReference>
<dbReference type="IntAct" id="F4I0K2">
    <property type="interactions" value="1"/>
</dbReference>
<dbReference type="STRING" id="3702.F4I0K2"/>
<dbReference type="iPTMnet" id="F4I0K2"/>
<dbReference type="PaxDb" id="3702-AT1G69200.1"/>
<dbReference type="ProteomicsDB" id="232692"/>
<dbReference type="EnsemblPlants" id="AT1G69200.1">
    <property type="protein sequence ID" value="AT1G69200.1"/>
    <property type="gene ID" value="AT1G69200"/>
</dbReference>
<dbReference type="GeneID" id="843251"/>
<dbReference type="Gramene" id="AT1G69200.1">
    <property type="protein sequence ID" value="AT1G69200.1"/>
    <property type="gene ID" value="AT1G69200"/>
</dbReference>
<dbReference type="KEGG" id="ath:AT1G69200"/>
<dbReference type="Araport" id="AT1G69200"/>
<dbReference type="TAIR" id="AT1G69200">
    <property type="gene designation" value="FLN2"/>
</dbReference>
<dbReference type="eggNOG" id="KOG2855">
    <property type="taxonomic scope" value="Eukaryota"/>
</dbReference>
<dbReference type="HOGENOM" id="CLU_023435_0_0_1"/>
<dbReference type="InParanoid" id="F4I0K2"/>
<dbReference type="OMA" id="MKDALWA"/>
<dbReference type="PhylomeDB" id="F4I0K2"/>
<dbReference type="PRO" id="PR:F4I0K2"/>
<dbReference type="Proteomes" id="UP000006548">
    <property type="component" value="Chromosome 1"/>
</dbReference>
<dbReference type="ExpressionAtlas" id="F4I0K2">
    <property type="expression patterns" value="baseline and differential"/>
</dbReference>
<dbReference type="GO" id="GO:0042644">
    <property type="term" value="C:chloroplast nucleoid"/>
    <property type="evidence" value="ECO:0000314"/>
    <property type="project" value="TAIR"/>
</dbReference>
<dbReference type="GO" id="GO:0000427">
    <property type="term" value="C:plastid-encoded plastid RNA polymerase complex"/>
    <property type="evidence" value="ECO:0000315"/>
    <property type="project" value="UniProtKB"/>
</dbReference>
<dbReference type="GO" id="GO:0016301">
    <property type="term" value="F:kinase activity"/>
    <property type="evidence" value="ECO:0007669"/>
    <property type="project" value="UniProtKB-KW"/>
</dbReference>
<dbReference type="GO" id="GO:0009658">
    <property type="term" value="P:chloroplast organization"/>
    <property type="evidence" value="ECO:0000315"/>
    <property type="project" value="UniProtKB"/>
</dbReference>
<dbReference type="GO" id="GO:0009662">
    <property type="term" value="P:etioplast organization"/>
    <property type="evidence" value="ECO:0000315"/>
    <property type="project" value="TAIR"/>
</dbReference>
<dbReference type="GO" id="GO:0042793">
    <property type="term" value="P:plastid transcription"/>
    <property type="evidence" value="ECO:0000315"/>
    <property type="project" value="UniProtKB"/>
</dbReference>
<dbReference type="GO" id="GO:0006355">
    <property type="term" value="P:regulation of DNA-templated transcription"/>
    <property type="evidence" value="ECO:0000315"/>
    <property type="project" value="UniProtKB"/>
</dbReference>
<dbReference type="CDD" id="cd01167">
    <property type="entry name" value="bac_FRK"/>
    <property type="match status" value="1"/>
</dbReference>
<dbReference type="FunFam" id="3.40.1190.20:FF:000021">
    <property type="entry name" value="Fructokinase-like 2, chloroplastic"/>
    <property type="match status" value="1"/>
</dbReference>
<dbReference type="Gene3D" id="3.40.1190.20">
    <property type="match status" value="1"/>
</dbReference>
<dbReference type="InterPro" id="IPR050306">
    <property type="entry name" value="PfkB_Carbo_kinase"/>
</dbReference>
<dbReference type="InterPro" id="IPR011611">
    <property type="entry name" value="PfkB_dom"/>
</dbReference>
<dbReference type="InterPro" id="IPR029056">
    <property type="entry name" value="Ribokinase-like"/>
</dbReference>
<dbReference type="PANTHER" id="PTHR43085:SF2">
    <property type="entry name" value="FRUCTOKINASE-LIKE 2, CHLOROPLASTIC"/>
    <property type="match status" value="1"/>
</dbReference>
<dbReference type="PANTHER" id="PTHR43085">
    <property type="entry name" value="HEXOKINASE FAMILY MEMBER"/>
    <property type="match status" value="1"/>
</dbReference>
<dbReference type="Pfam" id="PF00294">
    <property type="entry name" value="PfkB"/>
    <property type="match status" value="1"/>
</dbReference>
<dbReference type="SUPFAM" id="SSF53613">
    <property type="entry name" value="Ribokinase-like"/>
    <property type="match status" value="1"/>
</dbReference>
<protein>
    <recommendedName>
        <fullName evidence="8">Fructokinase-like 2, chloroplastic</fullName>
        <shortName evidence="8">AtFLN2</shortName>
    </recommendedName>
    <alternativeName>
        <fullName evidence="9">Plastid-encoded RNA polymerase-associated protein 13</fullName>
        <shortName evidence="9">PEP-associated protein 13</shortName>
    </alternativeName>
    <alternativeName>
        <fullName evidence="7">pfkB-type carbohydrate kinase family protein 1</fullName>
    </alternativeName>
</protein>
<keyword id="KW-0150">Chloroplast</keyword>
<keyword id="KW-0418">Kinase</keyword>
<keyword id="KW-0934">Plastid</keyword>
<keyword id="KW-1185">Reference proteome</keyword>
<keyword id="KW-0804">Transcription</keyword>
<keyword id="KW-0805">Transcription regulation</keyword>
<keyword id="KW-0808">Transferase</keyword>
<keyword id="KW-0809">Transit peptide</keyword>
<accession>F4I0K2</accession>
<accession>Q9C978</accession>
<accession>Q9LQA2</accession>
<name>SCKL2_ARATH</name>
<sequence>MASLSFTQFLSFPRCNADVPCLLQSHGFVKFRGERWNGKQSFSMAAGRRKLSESAPLEEEGNDGNGAVVGKKPSKSVKRTTKKKVVVKDEPLEEISEFLVDNDDVLDKESIVSALKPKKTRTRKKAAAASSDVEEVKTEKKVRRKRTVKKDKDVEDDLATIMDAEVSDVEEALAVESTDTESEEEEIDLSKHEGEDISHTYGWPPLVCCFGSAQHAFVPSGRPANRLLDYELHERMRDAKWAPEKYIRAPGGCAGGVAIALASLGGKVAFMGKLGADDYGQAMLYYLNVCKVQTRSVKIDGKRVTACSTMKISKRGRLKSTCIKPCAEDSLSKSEINVDVLKEAKMFYFSTHSLLDKKMMSTTIQAIKISKQLGNVIFYDLNLPLPLWHSSEETKSFIQEVWNLADVIEITKQELEFLCGIEPTEEFDTENNDISKFVHYPPETVEQLWHENLKVLFVTNGTSKIHYYTKEHNGAVSGMEDVPITPFTRDMSASGDGIVAGLIRMLTVQPDLMNNKGYLERTARYAIECGIIDQWLLAQTRGYPPKDDMEEEEDDEEEDEVESDPNGIRSITEKEYRTSKPYDEPDGPYVMKPVEEREYKKLELVGSMFEDGSL</sequence>
<proteinExistence type="evidence at protein level"/>